<gene>
    <name type="primary">rps4</name>
</gene>
<sequence length="202" mass="23578">MSRYRGPRVRIIRRLGALPGLTNKTPQLKSSSINQSASNKKISQYRIRLEEKQKLRFHYGITERQLLNYVRIARKAKGSTGEILLQLLEMRLDNVIFRLGMTPTIPGARQLVNHRHILVNGYIVDIPSYRCKPQDFINIKNQRKSEAIISKNIEFYQKYKIPNHLTYNSLEKKGLVNQILNRESIGLKINELLVVEYYSRQA</sequence>
<evidence type="ECO:0000250" key="1"/>
<evidence type="ECO:0000305" key="2"/>
<feature type="chain" id="PRO_0000132607" description="Small ribosomal subunit protein uS4c">
    <location>
        <begin position="1"/>
        <end position="202"/>
    </location>
</feature>
<feature type="domain" description="S4 RNA-binding">
    <location>
        <begin position="90"/>
        <end position="153"/>
    </location>
</feature>
<name>RR4_HYPDI</name>
<comment type="function">
    <text evidence="1">One of the primary rRNA binding proteins, it binds directly to 16S rRNA where it nucleates assembly of the body of the 30S subunit.</text>
</comment>
<comment type="function">
    <text evidence="1">With S5 and S12 plays an important role in translational accuracy.</text>
</comment>
<comment type="subunit">
    <text evidence="1">Part of the 30S ribosomal subunit. Contacts protein S5. The interaction surface between S4 and S5 is involved in control of translational fidelity (By similarity).</text>
</comment>
<comment type="subcellular location">
    <subcellularLocation>
        <location>Plastid</location>
        <location>Chloroplast</location>
    </subcellularLocation>
</comment>
<comment type="similarity">
    <text evidence="2">Belongs to the universal ribosomal protein uS4 family.</text>
</comment>
<organism>
    <name type="scientific">Hypopterygium didictyon</name>
    <dbReference type="NCBI Taxonomy" id="98740"/>
    <lineage>
        <taxon>Eukaryota</taxon>
        <taxon>Viridiplantae</taxon>
        <taxon>Streptophyta</taxon>
        <taxon>Embryophyta</taxon>
        <taxon>Bryophyta</taxon>
        <taxon>Bryophytina</taxon>
        <taxon>Bryopsida</taxon>
        <taxon>Bryidae</taxon>
        <taxon>Hypnanae</taxon>
        <taxon>Hookeriales</taxon>
        <taxon>Hypopterygiaceae</taxon>
        <taxon>Hypopterygium</taxon>
    </lineage>
</organism>
<geneLocation type="chloroplast"/>
<protein>
    <recommendedName>
        <fullName evidence="2">Small ribosomal subunit protein uS4c</fullName>
    </recommendedName>
    <alternativeName>
        <fullName>30S ribosomal protein S4, chloroplastic</fullName>
    </alternativeName>
</protein>
<reference key="1">
    <citation type="journal article" date="2002" name="Cryptogam. Bryol.">
        <title>The systematic position of the Hypoptergiaceae (Bryopsida) inferred from rps4 gene sequences.</title>
        <authorList>
            <person name="Bloecher R."/>
            <person name="Capesius I."/>
        </authorList>
    </citation>
    <scope>NUCLEOTIDE SEQUENCE [GENOMIC DNA]</scope>
    <source>
        <tissue>Gametophyte</tissue>
    </source>
</reference>
<keyword id="KW-0150">Chloroplast</keyword>
<keyword id="KW-0934">Plastid</keyword>
<keyword id="KW-0687">Ribonucleoprotein</keyword>
<keyword id="KW-0689">Ribosomal protein</keyword>
<keyword id="KW-0694">RNA-binding</keyword>
<keyword id="KW-0699">rRNA-binding</keyword>
<accession>P59143</accession>
<proteinExistence type="inferred from homology"/>
<dbReference type="EMBL" id="AJ252292">
    <property type="protein sequence ID" value="CAC81025.1"/>
    <property type="molecule type" value="Genomic_DNA"/>
</dbReference>
<dbReference type="SMR" id="P59143"/>
<dbReference type="GO" id="GO:0009507">
    <property type="term" value="C:chloroplast"/>
    <property type="evidence" value="ECO:0007669"/>
    <property type="project" value="UniProtKB-SubCell"/>
</dbReference>
<dbReference type="GO" id="GO:0015935">
    <property type="term" value="C:small ribosomal subunit"/>
    <property type="evidence" value="ECO:0007669"/>
    <property type="project" value="InterPro"/>
</dbReference>
<dbReference type="GO" id="GO:0019843">
    <property type="term" value="F:rRNA binding"/>
    <property type="evidence" value="ECO:0007669"/>
    <property type="project" value="UniProtKB-UniRule"/>
</dbReference>
<dbReference type="GO" id="GO:0003735">
    <property type="term" value="F:structural constituent of ribosome"/>
    <property type="evidence" value="ECO:0007669"/>
    <property type="project" value="InterPro"/>
</dbReference>
<dbReference type="GO" id="GO:0042274">
    <property type="term" value="P:ribosomal small subunit biogenesis"/>
    <property type="evidence" value="ECO:0007669"/>
    <property type="project" value="TreeGrafter"/>
</dbReference>
<dbReference type="GO" id="GO:0006412">
    <property type="term" value="P:translation"/>
    <property type="evidence" value="ECO:0007669"/>
    <property type="project" value="UniProtKB-UniRule"/>
</dbReference>
<dbReference type="CDD" id="cd00165">
    <property type="entry name" value="S4"/>
    <property type="match status" value="1"/>
</dbReference>
<dbReference type="FunFam" id="1.10.1050.10:FF:000002">
    <property type="entry name" value="30S ribosomal protein S4, chloroplastic"/>
    <property type="match status" value="1"/>
</dbReference>
<dbReference type="FunFam" id="3.10.290.10:FF:000081">
    <property type="entry name" value="30S ribosomal protein S4, chloroplastic"/>
    <property type="match status" value="1"/>
</dbReference>
<dbReference type="Gene3D" id="1.10.1050.10">
    <property type="entry name" value="Ribosomal Protein S4 Delta 41, Chain A, domain 1"/>
    <property type="match status" value="1"/>
</dbReference>
<dbReference type="Gene3D" id="3.10.290.10">
    <property type="entry name" value="RNA-binding S4 domain"/>
    <property type="match status" value="1"/>
</dbReference>
<dbReference type="HAMAP" id="MF_01306_B">
    <property type="entry name" value="Ribosomal_uS4_B"/>
    <property type="match status" value="1"/>
</dbReference>
<dbReference type="InterPro" id="IPR022801">
    <property type="entry name" value="Ribosomal_uS4"/>
</dbReference>
<dbReference type="InterPro" id="IPR005709">
    <property type="entry name" value="Ribosomal_uS4_bac-type"/>
</dbReference>
<dbReference type="InterPro" id="IPR018079">
    <property type="entry name" value="Ribosomal_uS4_CS"/>
</dbReference>
<dbReference type="InterPro" id="IPR001912">
    <property type="entry name" value="Ribosomal_uS4_N"/>
</dbReference>
<dbReference type="InterPro" id="IPR002942">
    <property type="entry name" value="S4_RNA-bd"/>
</dbReference>
<dbReference type="InterPro" id="IPR036986">
    <property type="entry name" value="S4_RNA-bd_sf"/>
</dbReference>
<dbReference type="NCBIfam" id="NF003717">
    <property type="entry name" value="PRK05327.1"/>
    <property type="match status" value="1"/>
</dbReference>
<dbReference type="NCBIfam" id="TIGR01017">
    <property type="entry name" value="rpsD_bact"/>
    <property type="match status" value="1"/>
</dbReference>
<dbReference type="PANTHER" id="PTHR11831">
    <property type="entry name" value="30S 40S RIBOSOMAL PROTEIN"/>
    <property type="match status" value="1"/>
</dbReference>
<dbReference type="PANTHER" id="PTHR11831:SF4">
    <property type="entry name" value="SMALL RIBOSOMAL SUBUNIT PROTEIN US4M"/>
    <property type="match status" value="1"/>
</dbReference>
<dbReference type="Pfam" id="PF00163">
    <property type="entry name" value="Ribosomal_S4"/>
    <property type="match status" value="1"/>
</dbReference>
<dbReference type="Pfam" id="PF01479">
    <property type="entry name" value="S4"/>
    <property type="match status" value="1"/>
</dbReference>
<dbReference type="SMART" id="SM01390">
    <property type="entry name" value="Ribosomal_S4"/>
    <property type="match status" value="1"/>
</dbReference>
<dbReference type="SMART" id="SM00363">
    <property type="entry name" value="S4"/>
    <property type="match status" value="1"/>
</dbReference>
<dbReference type="SUPFAM" id="SSF55174">
    <property type="entry name" value="Alpha-L RNA-binding motif"/>
    <property type="match status" value="1"/>
</dbReference>
<dbReference type="PROSITE" id="PS00632">
    <property type="entry name" value="RIBOSOMAL_S4"/>
    <property type="match status" value="1"/>
</dbReference>
<dbReference type="PROSITE" id="PS50889">
    <property type="entry name" value="S4"/>
    <property type="match status" value="1"/>
</dbReference>